<sequence>MNPRLRHWREAASVLLAAGAPGRRSPSPLGPCDYELLFLQRSSRSGFMPSAHVFPGGLVEAADFSAEWLRLLPAAPRCGLGAVRPPPPGGSRAPLFATDRQPLGSPLPGEVAFRICAIRETFEEAGILLLAPGGRPREGSGPAPSLPAEQLLPAAELGEWRRRVQEDPACFLQLCQRLGRVPDIWALQEWSNWLTPVGRAGRGGRRYDTAFYLCCLETRPPHTSQDNQEIAAFLWSSPPEAIERFKSQEIWLAPPQFYELCRLCNFSSLNDLHKFSSDRALEGCERWLPVTLTAADGFIQLLPGDELYPEDPDYTGEKKITMSTDKMVEDLMKEGSVFHRIVIKNTHSLAVYVNIQAKYKHMNPLMINTDSSNYNSRL</sequence>
<dbReference type="EC" id="3.6.1.-"/>
<dbReference type="EC" id="3.6.1.77" evidence="1"/>
<dbReference type="EMBL" id="AJ719921">
    <property type="protein sequence ID" value="CAG31580.1"/>
    <property type="molecule type" value="mRNA"/>
</dbReference>
<dbReference type="RefSeq" id="NP_001026629.1">
    <property type="nucleotide sequence ID" value="NM_001031458.2"/>
</dbReference>
<dbReference type="FunCoup" id="Q5ZL13">
    <property type="interactions" value="96"/>
</dbReference>
<dbReference type="STRING" id="9031.ENSGALP00000050272"/>
<dbReference type="PaxDb" id="9031-ENSGALP00000038637"/>
<dbReference type="Ensembl" id="ENSGALT00010060589.1">
    <property type="protein sequence ID" value="ENSGALP00010037349.1"/>
    <property type="gene ID" value="ENSGALG00010024820.1"/>
</dbReference>
<dbReference type="GeneID" id="427548"/>
<dbReference type="KEGG" id="gga:427548"/>
<dbReference type="CTD" id="390916"/>
<dbReference type="VEuPathDB" id="HostDB:geneid_427548"/>
<dbReference type="eggNOG" id="KOG3904">
    <property type="taxonomic scope" value="Eukaryota"/>
</dbReference>
<dbReference type="GeneTree" id="ENSGT00420000029858"/>
<dbReference type="InParanoid" id="Q5ZL13"/>
<dbReference type="OMA" id="GFMPSAH"/>
<dbReference type="OrthoDB" id="1695362at2759"/>
<dbReference type="PhylomeDB" id="Q5ZL13"/>
<dbReference type="Reactome" id="R-GGA-390918">
    <property type="pathway name" value="Peroxisomal lipid metabolism"/>
</dbReference>
<dbReference type="Reactome" id="R-GGA-9033241">
    <property type="pathway name" value="Peroxisomal protein import"/>
</dbReference>
<dbReference type="PRO" id="PR:Q5ZL13"/>
<dbReference type="Proteomes" id="UP000000539">
    <property type="component" value="Chromosome 11"/>
</dbReference>
<dbReference type="Bgee" id="ENSGALG00000029498">
    <property type="expression patterns" value="Expressed in spermatid and 13 other cell types or tissues"/>
</dbReference>
<dbReference type="GO" id="GO:0005777">
    <property type="term" value="C:peroxisome"/>
    <property type="evidence" value="ECO:0007669"/>
    <property type="project" value="UniProtKB-SubCell"/>
</dbReference>
<dbReference type="GO" id="GO:0010945">
    <property type="term" value="F:coenzyme A diphosphatase activity"/>
    <property type="evidence" value="ECO:0007669"/>
    <property type="project" value="RHEA"/>
</dbReference>
<dbReference type="GO" id="GO:0000287">
    <property type="term" value="F:magnesium ion binding"/>
    <property type="evidence" value="ECO:0000250"/>
    <property type="project" value="UniProtKB"/>
</dbReference>
<dbReference type="GO" id="GO:0044580">
    <property type="term" value="P:butyryl-CoA catabolic process"/>
    <property type="evidence" value="ECO:0000250"/>
    <property type="project" value="UniProtKB"/>
</dbReference>
<dbReference type="GO" id="GO:0015938">
    <property type="term" value="P:coenzyme A catabolic process"/>
    <property type="evidence" value="ECO:0000250"/>
    <property type="project" value="UniProtKB"/>
</dbReference>
<dbReference type="GO" id="GO:2001294">
    <property type="term" value="P:malonyl-CoA catabolic process"/>
    <property type="evidence" value="ECO:0000250"/>
    <property type="project" value="UniProtKB"/>
</dbReference>
<dbReference type="GO" id="GO:0036114">
    <property type="term" value="P:medium-chain fatty-acyl-CoA catabolic process"/>
    <property type="evidence" value="ECO:0000250"/>
    <property type="project" value="UniProtKB"/>
</dbReference>
<dbReference type="GO" id="GO:1902858">
    <property type="term" value="P:propionyl-CoA metabolic process"/>
    <property type="evidence" value="ECO:0000250"/>
    <property type="project" value="UniProtKB"/>
</dbReference>
<dbReference type="GO" id="GO:1901289">
    <property type="term" value="P:succinyl-CoA catabolic process"/>
    <property type="evidence" value="ECO:0000250"/>
    <property type="project" value="UniProtKB"/>
</dbReference>
<dbReference type="CDD" id="cd18870">
    <property type="entry name" value="NUDIX_AcylCoAdiphos_Nudt19"/>
    <property type="match status" value="1"/>
</dbReference>
<dbReference type="Gene3D" id="3.90.79.10">
    <property type="entry name" value="Nucleoside Triphosphate Pyrophosphohydrolase"/>
    <property type="match status" value="1"/>
</dbReference>
<dbReference type="InterPro" id="IPR015797">
    <property type="entry name" value="NUDIX_hydrolase-like_dom_sf"/>
</dbReference>
<dbReference type="InterPro" id="IPR000086">
    <property type="entry name" value="NUDIX_hydrolase_dom"/>
</dbReference>
<dbReference type="InterPro" id="IPR039121">
    <property type="entry name" value="NUDT19"/>
</dbReference>
<dbReference type="PANTHER" id="PTHR12318:SF0">
    <property type="entry name" value="ACYL-COENZYME A DIPHOSPHATASE NUDT19"/>
    <property type="match status" value="1"/>
</dbReference>
<dbReference type="PANTHER" id="PTHR12318">
    <property type="entry name" value="TESTOSTERONE-REGULATED PROTEIN RP2"/>
    <property type="match status" value="1"/>
</dbReference>
<dbReference type="SUPFAM" id="SSF55811">
    <property type="entry name" value="Nudix"/>
    <property type="match status" value="1"/>
</dbReference>
<dbReference type="PROSITE" id="PS51462">
    <property type="entry name" value="NUDIX"/>
    <property type="match status" value="1"/>
</dbReference>
<protein>
    <recommendedName>
        <fullName>Acyl-coenzyme A diphosphatase NUDT19</fullName>
        <ecNumber>3.6.1.-</ecNumber>
        <ecNumber evidence="1">3.6.1.77</ecNumber>
    </recommendedName>
    <alternativeName>
        <fullName>Nucleoside diphosphate-linked moiety X motif 19</fullName>
        <shortName>Nudix motif 19</shortName>
    </alternativeName>
</protein>
<gene>
    <name type="primary">NUDT19</name>
    <name type="ORF">RCJMB04_8e7</name>
</gene>
<feature type="chain" id="PRO_0000324575" description="Acyl-coenzyme A diphosphatase NUDT19">
    <location>
        <begin position="1"/>
        <end position="378"/>
    </location>
</feature>
<feature type="domain" description="Nudix hydrolase" evidence="3">
    <location>
        <begin position="7"/>
        <end position="258"/>
    </location>
</feature>
<feature type="short sequence motif" description="Nudix box">
    <location>
        <begin position="105"/>
        <end position="126"/>
    </location>
</feature>
<feature type="short sequence motif" description="Microbody targeting signal" evidence="2">
    <location>
        <begin position="376"/>
        <end position="378"/>
    </location>
</feature>
<feature type="binding site" evidence="1">
    <location>
        <position position="120"/>
    </location>
    <ligand>
        <name>Mg(2+)</name>
        <dbReference type="ChEBI" id="CHEBI:18420"/>
    </ligand>
</feature>
<feature type="binding site" evidence="1">
    <location>
        <position position="124"/>
    </location>
    <ligand>
        <name>Mg(2+)</name>
        <dbReference type="ChEBI" id="CHEBI:18420"/>
    </ligand>
</feature>
<feature type="site" description="Important for coenzyme A binding" evidence="1">
    <location>
        <position position="41"/>
    </location>
</feature>
<feature type="site" description="Important for coenzyme A binding" evidence="1">
    <location>
        <position position="47"/>
    </location>
</feature>
<feature type="site" description="Important for coenzyme A binding" evidence="1">
    <location>
        <position position="205"/>
    </location>
</feature>
<accession>Q5ZL13</accession>
<evidence type="ECO:0000250" key="1">
    <source>
        <dbReference type="UniProtKB" id="P11930"/>
    </source>
</evidence>
<evidence type="ECO:0000255" key="2"/>
<evidence type="ECO:0000255" key="3">
    <source>
        <dbReference type="PROSITE-ProRule" id="PRU00794"/>
    </source>
</evidence>
<evidence type="ECO:0000305" key="4"/>
<name>NUD19_CHICK</name>
<proteinExistence type="evidence at transcript level"/>
<comment type="function">
    <text evidence="1">Fatty acyl-coenzyme A (CoA) diphosphatase that hydrolyzes fatty acyl-CoA to yield acyl-4'-phosphopantetheine and adenosine 3',5'-bisphosphate (By similarity). Mediates the hydrolysis of a wide range of CoA esters, including choloyl-CoA and branched-chain fatty-acyl-CoA esters and at low substrate concentrations medium and long-chain fatty-acyl-CoA esters are the primary substrates (By similarity). Highest activity seen with medium-chain acyl-CoA esters and higher rates of activity seen with the unsaturated acyl-CoA esters compared with the saturated esters (By similarity). Exhibits decapping activity towards dpCoA-capped RNAs in vitro (By similarity).</text>
</comment>
<comment type="catalytic activity">
    <reaction evidence="1">
        <text>an acyl-CoA + H2O = an acyl-4'-phosphopantetheine + adenosine 3',5'-bisphosphate + 2 H(+)</text>
        <dbReference type="Rhea" id="RHEA:50044"/>
        <dbReference type="ChEBI" id="CHEBI:15377"/>
        <dbReference type="ChEBI" id="CHEBI:15378"/>
        <dbReference type="ChEBI" id="CHEBI:58342"/>
        <dbReference type="ChEBI" id="CHEBI:58343"/>
        <dbReference type="ChEBI" id="CHEBI:132023"/>
    </reaction>
    <physiologicalReaction direction="left-to-right" evidence="1">
        <dbReference type="Rhea" id="RHEA:50045"/>
    </physiologicalReaction>
</comment>
<comment type="catalytic activity">
    <reaction evidence="1">
        <text>CoA + H2O = (R)-4'-phosphopantetheine + adenosine 3',5'-bisphosphate + 2 H(+)</text>
        <dbReference type="Rhea" id="RHEA:64988"/>
        <dbReference type="ChEBI" id="CHEBI:15377"/>
        <dbReference type="ChEBI" id="CHEBI:15378"/>
        <dbReference type="ChEBI" id="CHEBI:57287"/>
        <dbReference type="ChEBI" id="CHEBI:58343"/>
        <dbReference type="ChEBI" id="CHEBI:61723"/>
        <dbReference type="EC" id="3.6.1.77"/>
    </reaction>
    <physiologicalReaction direction="left-to-right" evidence="1">
        <dbReference type="Rhea" id="RHEA:64989"/>
    </physiologicalReaction>
</comment>
<comment type="catalytic activity">
    <reaction evidence="1">
        <text>hexanoyl-CoA + H2O = hexanoyl-4'-phosphopantetheine + adenosine 3',5'-bisphosphate + 2 H(+)</text>
        <dbReference type="Rhea" id="RHEA:49980"/>
        <dbReference type="ChEBI" id="CHEBI:15377"/>
        <dbReference type="ChEBI" id="CHEBI:15378"/>
        <dbReference type="ChEBI" id="CHEBI:58343"/>
        <dbReference type="ChEBI" id="CHEBI:62620"/>
        <dbReference type="ChEBI" id="CHEBI:132012"/>
    </reaction>
    <physiologicalReaction direction="left-to-right" evidence="1">
        <dbReference type="Rhea" id="RHEA:49981"/>
    </physiologicalReaction>
</comment>
<comment type="catalytic activity">
    <reaction evidence="1">
        <text>octanoyl-CoA + H2O = S-octanoyl-4'-phosphopantetheine + adenosine 3',5'-bisphosphate + 2 H(+)</text>
        <dbReference type="Rhea" id="RHEA:50016"/>
        <dbReference type="ChEBI" id="CHEBI:15377"/>
        <dbReference type="ChEBI" id="CHEBI:15378"/>
        <dbReference type="ChEBI" id="CHEBI:57386"/>
        <dbReference type="ChEBI" id="CHEBI:58343"/>
        <dbReference type="ChEBI" id="CHEBI:132013"/>
    </reaction>
    <physiologicalReaction direction="left-to-right" evidence="1">
        <dbReference type="Rhea" id="RHEA:50017"/>
    </physiologicalReaction>
</comment>
<comment type="catalytic activity">
    <reaction evidence="1">
        <text>butanoyl-CoA + H2O = S-butanoyl-4'-phosphopantetheine + adenosine 3',5'-bisphosphate + 2 H(+)</text>
        <dbReference type="Rhea" id="RHEA:49976"/>
        <dbReference type="ChEBI" id="CHEBI:15377"/>
        <dbReference type="ChEBI" id="CHEBI:15378"/>
        <dbReference type="ChEBI" id="CHEBI:57371"/>
        <dbReference type="ChEBI" id="CHEBI:58343"/>
        <dbReference type="ChEBI" id="CHEBI:132011"/>
    </reaction>
    <physiologicalReaction direction="left-to-right" evidence="1">
        <dbReference type="Rhea" id="RHEA:49977"/>
    </physiologicalReaction>
</comment>
<comment type="catalytic activity">
    <reaction evidence="1">
        <text>propanoyl-CoA + H2O = propanoyl-4'-phosphopantetheine + adenosine 3',5'-bisphosphate + 2 H(+)</text>
        <dbReference type="Rhea" id="RHEA:67464"/>
        <dbReference type="ChEBI" id="CHEBI:15377"/>
        <dbReference type="ChEBI" id="CHEBI:15378"/>
        <dbReference type="ChEBI" id="CHEBI:57392"/>
        <dbReference type="ChEBI" id="CHEBI:58343"/>
        <dbReference type="ChEBI" id="CHEBI:172362"/>
    </reaction>
    <physiologicalReaction direction="left-to-right" evidence="1">
        <dbReference type="Rhea" id="RHEA:67465"/>
    </physiologicalReaction>
</comment>
<comment type="catalytic activity">
    <reaction evidence="1">
        <text>malonyl-CoA + H2O = malonyl-4'-phosphopantetheine + adenosine 3',5'-bisphosphate + 2 H(+)</text>
        <dbReference type="Rhea" id="RHEA:67468"/>
        <dbReference type="ChEBI" id="CHEBI:15377"/>
        <dbReference type="ChEBI" id="CHEBI:15378"/>
        <dbReference type="ChEBI" id="CHEBI:57384"/>
        <dbReference type="ChEBI" id="CHEBI:58343"/>
        <dbReference type="ChEBI" id="CHEBI:172363"/>
    </reaction>
    <physiologicalReaction direction="left-to-right" evidence="1">
        <dbReference type="Rhea" id="RHEA:67469"/>
    </physiologicalReaction>
</comment>
<comment type="catalytic activity">
    <reaction evidence="1">
        <text>succinyl-CoA + H2O = succinyl-4'-phosphopantetheine + adenosine 3',5'-bisphosphate + 2 H(+)</text>
        <dbReference type="Rhea" id="RHEA:67472"/>
        <dbReference type="ChEBI" id="CHEBI:15377"/>
        <dbReference type="ChEBI" id="CHEBI:15378"/>
        <dbReference type="ChEBI" id="CHEBI:57292"/>
        <dbReference type="ChEBI" id="CHEBI:58343"/>
        <dbReference type="ChEBI" id="CHEBI:172364"/>
    </reaction>
    <physiologicalReaction direction="left-to-right" evidence="1">
        <dbReference type="Rhea" id="RHEA:67473"/>
    </physiologicalReaction>
</comment>
<comment type="catalytic activity">
    <reaction evidence="1">
        <text>choloyl-CoA + H2O = S-choloyl-4'-phosphopantetheine + adenosine 3',5'-bisphosphate + 2 H(+)</text>
        <dbReference type="Rhea" id="RHEA:50036"/>
        <dbReference type="ChEBI" id="CHEBI:15377"/>
        <dbReference type="ChEBI" id="CHEBI:15378"/>
        <dbReference type="ChEBI" id="CHEBI:57373"/>
        <dbReference type="ChEBI" id="CHEBI:58343"/>
        <dbReference type="ChEBI" id="CHEBI:132020"/>
    </reaction>
    <physiologicalReaction direction="left-to-right" evidence="1">
        <dbReference type="Rhea" id="RHEA:50037"/>
    </physiologicalReaction>
</comment>
<comment type="catalytic activity">
    <reaction evidence="1">
        <text>4,8-dimethylnonanoyl-CoA + H2O = S-(4,8-dimethylnonanoyl)-4'-phosphopantetheine + adenosine 3',5'-bisphosphate + 2 H(+)</text>
        <dbReference type="Rhea" id="RHEA:67524"/>
        <dbReference type="ChEBI" id="CHEBI:15377"/>
        <dbReference type="ChEBI" id="CHEBI:15378"/>
        <dbReference type="ChEBI" id="CHEBI:58343"/>
        <dbReference type="ChEBI" id="CHEBI:77061"/>
        <dbReference type="ChEBI" id="CHEBI:172385"/>
    </reaction>
    <physiologicalReaction direction="left-to-right" evidence="1">
        <dbReference type="Rhea" id="RHEA:67525"/>
    </physiologicalReaction>
</comment>
<comment type="catalytic activity">
    <reaction evidence="1">
        <text>(9Z,12Z,15Z)-octadecatrienoyl-CoA + H2O = S-(9Z,12Z,15Z-octadecatrienoyl)-4'-phosphopantetheine + adenosine 3',5'-bisphosphate + 2 H(+)</text>
        <dbReference type="Rhea" id="RHEA:67532"/>
        <dbReference type="ChEBI" id="CHEBI:15377"/>
        <dbReference type="ChEBI" id="CHEBI:15378"/>
        <dbReference type="ChEBI" id="CHEBI:58343"/>
        <dbReference type="ChEBI" id="CHEBI:74034"/>
        <dbReference type="ChEBI" id="CHEBI:172386"/>
    </reaction>
    <physiologicalReaction direction="left-to-right" evidence="1">
        <dbReference type="Rhea" id="RHEA:67533"/>
    </physiologicalReaction>
</comment>
<comment type="catalytic activity">
    <reaction evidence="1">
        <text>(9Z,12Z)-octadecadienoyl-CoA + H2O = S-(9Z,12Z-octadecadienoyl)-4'-phosphopantetheine + adenosine 3',5'-bisphosphate + 2 H(+)</text>
        <dbReference type="Rhea" id="RHEA:67536"/>
        <dbReference type="ChEBI" id="CHEBI:15377"/>
        <dbReference type="ChEBI" id="CHEBI:15378"/>
        <dbReference type="ChEBI" id="CHEBI:57383"/>
        <dbReference type="ChEBI" id="CHEBI:58343"/>
        <dbReference type="ChEBI" id="CHEBI:172387"/>
    </reaction>
    <physiologicalReaction direction="left-to-right" evidence="1">
        <dbReference type="Rhea" id="RHEA:67537"/>
    </physiologicalReaction>
</comment>
<comment type="catalytic activity">
    <reaction evidence="1">
        <text>(9Z)-hexadecenoyl-CoA + H2O = S-(9Z-hexadecenoyl)-4'-phosphopantetheine + adenosine 3',5'-bisphosphate + 2 H(+)</text>
        <dbReference type="Rhea" id="RHEA:67540"/>
        <dbReference type="ChEBI" id="CHEBI:15377"/>
        <dbReference type="ChEBI" id="CHEBI:15378"/>
        <dbReference type="ChEBI" id="CHEBI:58343"/>
        <dbReference type="ChEBI" id="CHEBI:61540"/>
        <dbReference type="ChEBI" id="CHEBI:172388"/>
    </reaction>
    <physiologicalReaction direction="left-to-right" evidence="1">
        <dbReference type="Rhea" id="RHEA:67541"/>
    </physiologicalReaction>
</comment>
<comment type="catalytic activity">
    <reaction evidence="1">
        <text>(9Z)-tetradecenoyl-CoA + H2O = S-(9Z-tetradecenoyl)-4'-phosphopantetheine + adenosine 3',5'-bisphosphate + 2 H(+)</text>
        <dbReference type="Rhea" id="RHEA:67544"/>
        <dbReference type="ChEBI" id="CHEBI:15377"/>
        <dbReference type="ChEBI" id="CHEBI:15378"/>
        <dbReference type="ChEBI" id="CHEBI:58343"/>
        <dbReference type="ChEBI" id="CHEBI:65060"/>
        <dbReference type="ChEBI" id="CHEBI:172389"/>
    </reaction>
    <physiologicalReaction direction="left-to-right" evidence="1">
        <dbReference type="Rhea" id="RHEA:67545"/>
    </physiologicalReaction>
</comment>
<comment type="catalytic activity">
    <reaction evidence="1">
        <text>(6Z)-octenoyl-CoA + H2O = S-(6Z-octenoyl)-4'-phosphopantetheine + adenosine 3',5'-bisphosphate + 2 H(+)</text>
        <dbReference type="Rhea" id="RHEA:67528"/>
        <dbReference type="ChEBI" id="CHEBI:15377"/>
        <dbReference type="ChEBI" id="CHEBI:15378"/>
        <dbReference type="ChEBI" id="CHEBI:58343"/>
        <dbReference type="ChEBI" id="CHEBI:172383"/>
        <dbReference type="ChEBI" id="CHEBI:172384"/>
    </reaction>
    <physiologicalReaction direction="left-to-right" evidence="1">
        <dbReference type="Rhea" id="RHEA:67529"/>
    </physiologicalReaction>
</comment>
<comment type="catalytic activity">
    <reaction evidence="1">
        <text>hexadecanoyl-CoA + H2O = S-hexadecanoyl-4'-phosphopantetheine + adenosine 3',5'-bisphosphate + 2 H(+)</text>
        <dbReference type="Rhea" id="RHEA:50032"/>
        <dbReference type="ChEBI" id="CHEBI:15377"/>
        <dbReference type="ChEBI" id="CHEBI:15378"/>
        <dbReference type="ChEBI" id="CHEBI:57379"/>
        <dbReference type="ChEBI" id="CHEBI:58343"/>
        <dbReference type="ChEBI" id="CHEBI:132018"/>
    </reaction>
    <physiologicalReaction direction="left-to-right" evidence="1">
        <dbReference type="Rhea" id="RHEA:50033"/>
    </physiologicalReaction>
</comment>
<comment type="catalytic activity">
    <reaction evidence="1">
        <text>tetradecanoyl-CoA + H2O = tetradecanoyl-4'-phosphopantetheine + adenosine 3',5'-bisphosphate + 2 H(+)</text>
        <dbReference type="Rhea" id="RHEA:50028"/>
        <dbReference type="ChEBI" id="CHEBI:15377"/>
        <dbReference type="ChEBI" id="CHEBI:15378"/>
        <dbReference type="ChEBI" id="CHEBI:57385"/>
        <dbReference type="ChEBI" id="CHEBI:58343"/>
        <dbReference type="ChEBI" id="CHEBI:132017"/>
    </reaction>
    <physiologicalReaction direction="left-to-right" evidence="1">
        <dbReference type="Rhea" id="RHEA:50029"/>
    </physiologicalReaction>
</comment>
<comment type="catalytic activity">
    <reaction evidence="1">
        <text>dodecanoyl-CoA + H2O = S-dodecanoyl-4'-phosphopantetheine + adenosine 3',5'-bisphosphate + 2 H(+)</text>
        <dbReference type="Rhea" id="RHEA:50024"/>
        <dbReference type="ChEBI" id="CHEBI:15377"/>
        <dbReference type="ChEBI" id="CHEBI:15378"/>
        <dbReference type="ChEBI" id="CHEBI:57375"/>
        <dbReference type="ChEBI" id="CHEBI:58343"/>
        <dbReference type="ChEBI" id="CHEBI:132015"/>
    </reaction>
    <physiologicalReaction direction="left-to-right" evidence="1">
        <dbReference type="Rhea" id="RHEA:50025"/>
    </physiologicalReaction>
</comment>
<comment type="catalytic activity">
    <reaction evidence="1">
        <text>a 5'-end CoA-ribonucleoside in mRNA + H2O = a 5'-end phospho-adenosine-phospho-ribonucleoside in mRNA + (R)-4'-phosphopantetheine + 2 H(+)</text>
        <dbReference type="Rhea" id="RHEA:67592"/>
        <dbReference type="Rhea" id="RHEA-COMP:15719"/>
        <dbReference type="Rhea" id="RHEA-COMP:17276"/>
        <dbReference type="ChEBI" id="CHEBI:15377"/>
        <dbReference type="ChEBI" id="CHEBI:15378"/>
        <dbReference type="ChEBI" id="CHEBI:61723"/>
        <dbReference type="ChEBI" id="CHEBI:144051"/>
        <dbReference type="ChEBI" id="CHEBI:172371"/>
    </reaction>
    <physiologicalReaction direction="left-to-right" evidence="1">
        <dbReference type="Rhea" id="RHEA:67593"/>
    </physiologicalReaction>
</comment>
<comment type="cofactor">
    <cofactor evidence="1">
        <name>Mg(2+)</name>
        <dbReference type="ChEBI" id="CHEBI:18420"/>
    </cofactor>
    <cofactor evidence="1">
        <name>Mn(2+)</name>
        <dbReference type="ChEBI" id="CHEBI:29035"/>
    </cofactor>
</comment>
<comment type="subunit">
    <text evidence="1">Monomer.</text>
</comment>
<comment type="subcellular location">
    <subcellularLocation>
        <location evidence="1">Peroxisome</location>
    </subcellularLocation>
</comment>
<comment type="similarity">
    <text evidence="4">Belongs to the Nudix hydrolase family.</text>
</comment>
<organism>
    <name type="scientific">Gallus gallus</name>
    <name type="common">Chicken</name>
    <dbReference type="NCBI Taxonomy" id="9031"/>
    <lineage>
        <taxon>Eukaryota</taxon>
        <taxon>Metazoa</taxon>
        <taxon>Chordata</taxon>
        <taxon>Craniata</taxon>
        <taxon>Vertebrata</taxon>
        <taxon>Euteleostomi</taxon>
        <taxon>Archelosauria</taxon>
        <taxon>Archosauria</taxon>
        <taxon>Dinosauria</taxon>
        <taxon>Saurischia</taxon>
        <taxon>Theropoda</taxon>
        <taxon>Coelurosauria</taxon>
        <taxon>Aves</taxon>
        <taxon>Neognathae</taxon>
        <taxon>Galloanserae</taxon>
        <taxon>Galliformes</taxon>
        <taxon>Phasianidae</taxon>
        <taxon>Phasianinae</taxon>
        <taxon>Gallus</taxon>
    </lineage>
</organism>
<keyword id="KW-0378">Hydrolase</keyword>
<keyword id="KW-0460">Magnesium</keyword>
<keyword id="KW-0464">Manganese</keyword>
<keyword id="KW-0479">Metal-binding</keyword>
<keyword id="KW-0576">Peroxisome</keyword>
<keyword id="KW-1185">Reference proteome</keyword>
<reference key="1">
    <citation type="journal article" date="2005" name="Genome Biol.">
        <title>Full-length cDNAs from chicken bursal lymphocytes to facilitate gene function analysis.</title>
        <authorList>
            <person name="Caldwell R.B."/>
            <person name="Kierzek A.M."/>
            <person name="Arakawa H."/>
            <person name="Bezzubov Y."/>
            <person name="Zaim J."/>
            <person name="Fiedler P."/>
            <person name="Kutter S."/>
            <person name="Blagodatski A."/>
            <person name="Kostovska D."/>
            <person name="Koter M."/>
            <person name="Plachy J."/>
            <person name="Carninci P."/>
            <person name="Hayashizaki Y."/>
            <person name="Buerstedde J.-M."/>
        </authorList>
    </citation>
    <scope>NUCLEOTIDE SEQUENCE [LARGE SCALE MRNA]</scope>
    <source>
        <strain>CB</strain>
        <tissue>Bursa of Fabricius</tissue>
    </source>
</reference>